<gene>
    <name evidence="1" type="primary">rpsD</name>
    <name type="ordered locus">RBE_0841</name>
</gene>
<dbReference type="EMBL" id="CP000087">
    <property type="protein sequence ID" value="ABE04922.1"/>
    <property type="molecule type" value="Genomic_DNA"/>
</dbReference>
<dbReference type="RefSeq" id="WP_011477507.1">
    <property type="nucleotide sequence ID" value="NC_007940.1"/>
</dbReference>
<dbReference type="SMR" id="Q1RI92"/>
<dbReference type="KEGG" id="rbe:RBE_0841"/>
<dbReference type="eggNOG" id="COG0522">
    <property type="taxonomic scope" value="Bacteria"/>
</dbReference>
<dbReference type="HOGENOM" id="CLU_092403_0_0_5"/>
<dbReference type="OrthoDB" id="9803672at2"/>
<dbReference type="Proteomes" id="UP000001951">
    <property type="component" value="Chromosome"/>
</dbReference>
<dbReference type="GO" id="GO:0015935">
    <property type="term" value="C:small ribosomal subunit"/>
    <property type="evidence" value="ECO:0007669"/>
    <property type="project" value="InterPro"/>
</dbReference>
<dbReference type="GO" id="GO:0019843">
    <property type="term" value="F:rRNA binding"/>
    <property type="evidence" value="ECO:0007669"/>
    <property type="project" value="UniProtKB-UniRule"/>
</dbReference>
<dbReference type="GO" id="GO:0003735">
    <property type="term" value="F:structural constituent of ribosome"/>
    <property type="evidence" value="ECO:0007669"/>
    <property type="project" value="InterPro"/>
</dbReference>
<dbReference type="GO" id="GO:0042274">
    <property type="term" value="P:ribosomal small subunit biogenesis"/>
    <property type="evidence" value="ECO:0007669"/>
    <property type="project" value="TreeGrafter"/>
</dbReference>
<dbReference type="GO" id="GO:0006412">
    <property type="term" value="P:translation"/>
    <property type="evidence" value="ECO:0007669"/>
    <property type="project" value="UniProtKB-UniRule"/>
</dbReference>
<dbReference type="CDD" id="cd00165">
    <property type="entry name" value="S4"/>
    <property type="match status" value="1"/>
</dbReference>
<dbReference type="FunFam" id="3.10.290.10:FF:000001">
    <property type="entry name" value="30S ribosomal protein S4"/>
    <property type="match status" value="1"/>
</dbReference>
<dbReference type="Gene3D" id="1.10.1050.10">
    <property type="entry name" value="Ribosomal Protein S4 Delta 41, Chain A, domain 1"/>
    <property type="match status" value="1"/>
</dbReference>
<dbReference type="Gene3D" id="3.10.290.10">
    <property type="entry name" value="RNA-binding S4 domain"/>
    <property type="match status" value="1"/>
</dbReference>
<dbReference type="HAMAP" id="MF_01306_B">
    <property type="entry name" value="Ribosomal_uS4_B"/>
    <property type="match status" value="1"/>
</dbReference>
<dbReference type="InterPro" id="IPR022801">
    <property type="entry name" value="Ribosomal_uS4"/>
</dbReference>
<dbReference type="InterPro" id="IPR005709">
    <property type="entry name" value="Ribosomal_uS4_bac-type"/>
</dbReference>
<dbReference type="InterPro" id="IPR018079">
    <property type="entry name" value="Ribosomal_uS4_CS"/>
</dbReference>
<dbReference type="InterPro" id="IPR001912">
    <property type="entry name" value="Ribosomal_uS4_N"/>
</dbReference>
<dbReference type="InterPro" id="IPR002942">
    <property type="entry name" value="S4_RNA-bd"/>
</dbReference>
<dbReference type="InterPro" id="IPR036986">
    <property type="entry name" value="S4_RNA-bd_sf"/>
</dbReference>
<dbReference type="NCBIfam" id="NF003717">
    <property type="entry name" value="PRK05327.1"/>
    <property type="match status" value="1"/>
</dbReference>
<dbReference type="NCBIfam" id="TIGR01017">
    <property type="entry name" value="rpsD_bact"/>
    <property type="match status" value="1"/>
</dbReference>
<dbReference type="PANTHER" id="PTHR11831">
    <property type="entry name" value="30S 40S RIBOSOMAL PROTEIN"/>
    <property type="match status" value="1"/>
</dbReference>
<dbReference type="PANTHER" id="PTHR11831:SF4">
    <property type="entry name" value="SMALL RIBOSOMAL SUBUNIT PROTEIN US4M"/>
    <property type="match status" value="1"/>
</dbReference>
<dbReference type="Pfam" id="PF00163">
    <property type="entry name" value="Ribosomal_S4"/>
    <property type="match status" value="1"/>
</dbReference>
<dbReference type="Pfam" id="PF01479">
    <property type="entry name" value="S4"/>
    <property type="match status" value="1"/>
</dbReference>
<dbReference type="SMART" id="SM01390">
    <property type="entry name" value="Ribosomal_S4"/>
    <property type="match status" value="1"/>
</dbReference>
<dbReference type="SMART" id="SM00363">
    <property type="entry name" value="S4"/>
    <property type="match status" value="1"/>
</dbReference>
<dbReference type="SUPFAM" id="SSF55174">
    <property type="entry name" value="Alpha-L RNA-binding motif"/>
    <property type="match status" value="1"/>
</dbReference>
<dbReference type="PROSITE" id="PS00632">
    <property type="entry name" value="RIBOSOMAL_S4"/>
    <property type="match status" value="1"/>
</dbReference>
<dbReference type="PROSITE" id="PS50889">
    <property type="entry name" value="S4"/>
    <property type="match status" value="1"/>
</dbReference>
<evidence type="ECO:0000255" key="1">
    <source>
        <dbReference type="HAMAP-Rule" id="MF_01306"/>
    </source>
</evidence>
<evidence type="ECO:0000305" key="2"/>
<organism>
    <name type="scientific">Rickettsia bellii (strain RML369-C)</name>
    <dbReference type="NCBI Taxonomy" id="336407"/>
    <lineage>
        <taxon>Bacteria</taxon>
        <taxon>Pseudomonadati</taxon>
        <taxon>Pseudomonadota</taxon>
        <taxon>Alphaproteobacteria</taxon>
        <taxon>Rickettsiales</taxon>
        <taxon>Rickettsiaceae</taxon>
        <taxon>Rickettsieae</taxon>
        <taxon>Rickettsia</taxon>
        <taxon>belli group</taxon>
    </lineage>
</organism>
<proteinExistence type="inferred from homology"/>
<sequence>MTKIVRSKYKASRRLGVSLWGDGKDAFNTRNYRPGQHGRNTMVKTSDYGLHLKAKQRIKCHYGRITEKQFRNIFGFAQKMKGNTGENFIGLLESRLDSIVYRMNIAPTIFSSRQLISHGHIKVNGKKADIASMRLKEGDVIEIKEASRQMGIIQESVSKQGQTTPDYVSFDVDSLSGKYLRVPTISDVRYPFTPEVHLVVELYSR</sequence>
<accession>Q1RI92</accession>
<keyword id="KW-0687">Ribonucleoprotein</keyword>
<keyword id="KW-0689">Ribosomal protein</keyword>
<keyword id="KW-0694">RNA-binding</keyword>
<keyword id="KW-0699">rRNA-binding</keyword>
<protein>
    <recommendedName>
        <fullName evidence="1">Small ribosomal subunit protein uS4</fullName>
    </recommendedName>
    <alternativeName>
        <fullName evidence="2">30S ribosomal protein S4</fullName>
    </alternativeName>
</protein>
<feature type="chain" id="PRO_0000272396" description="Small ribosomal subunit protein uS4">
    <location>
        <begin position="1"/>
        <end position="205"/>
    </location>
</feature>
<feature type="domain" description="S4 RNA-binding" evidence="1">
    <location>
        <begin position="94"/>
        <end position="172"/>
    </location>
</feature>
<reference key="1">
    <citation type="journal article" date="2006" name="PLoS Genet.">
        <title>Genome sequence of Rickettsia bellii illuminates the role of amoebae in gene exchanges between intracellular pathogens.</title>
        <authorList>
            <person name="Ogata H."/>
            <person name="La Scola B."/>
            <person name="Audic S."/>
            <person name="Renesto P."/>
            <person name="Blanc G."/>
            <person name="Robert C."/>
            <person name="Fournier P.-E."/>
            <person name="Claverie J.-M."/>
            <person name="Raoult D."/>
        </authorList>
    </citation>
    <scope>NUCLEOTIDE SEQUENCE [LARGE SCALE GENOMIC DNA]</scope>
    <source>
        <strain>RML369-C</strain>
    </source>
</reference>
<comment type="function">
    <text evidence="1">One of the primary rRNA binding proteins, it binds directly to 16S rRNA where it nucleates assembly of the body of the 30S subunit.</text>
</comment>
<comment type="function">
    <text evidence="1">With S5 and S12 plays an important role in translational accuracy.</text>
</comment>
<comment type="subunit">
    <text evidence="1">Part of the 30S ribosomal subunit. Contacts protein S5. The interaction surface between S4 and S5 is involved in control of translational fidelity.</text>
</comment>
<comment type="similarity">
    <text evidence="1">Belongs to the universal ribosomal protein uS4 family.</text>
</comment>
<name>RS4_RICBR</name>